<proteinExistence type="inferred from homology"/>
<dbReference type="EMBL" id="CP000744">
    <property type="protein sequence ID" value="ABR84405.1"/>
    <property type="molecule type" value="Genomic_DNA"/>
</dbReference>
<dbReference type="RefSeq" id="WP_003097235.1">
    <property type="nucleotide sequence ID" value="NC_009656.1"/>
</dbReference>
<dbReference type="SMR" id="A6VF37"/>
<dbReference type="GeneID" id="98280758"/>
<dbReference type="KEGG" id="pap:PSPA7_6361"/>
<dbReference type="HOGENOM" id="CLU_148047_1_0_6"/>
<dbReference type="Proteomes" id="UP000001582">
    <property type="component" value="Chromosome"/>
</dbReference>
<dbReference type="GO" id="GO:0005886">
    <property type="term" value="C:plasma membrane"/>
    <property type="evidence" value="ECO:0007669"/>
    <property type="project" value="UniProtKB-SubCell"/>
</dbReference>
<dbReference type="GO" id="GO:0045259">
    <property type="term" value="C:proton-transporting ATP synthase complex"/>
    <property type="evidence" value="ECO:0007669"/>
    <property type="project" value="UniProtKB-KW"/>
</dbReference>
<dbReference type="GO" id="GO:0033177">
    <property type="term" value="C:proton-transporting two-sector ATPase complex, proton-transporting domain"/>
    <property type="evidence" value="ECO:0007669"/>
    <property type="project" value="InterPro"/>
</dbReference>
<dbReference type="GO" id="GO:0008289">
    <property type="term" value="F:lipid binding"/>
    <property type="evidence" value="ECO:0007669"/>
    <property type="project" value="UniProtKB-KW"/>
</dbReference>
<dbReference type="GO" id="GO:0046933">
    <property type="term" value="F:proton-transporting ATP synthase activity, rotational mechanism"/>
    <property type="evidence" value="ECO:0007669"/>
    <property type="project" value="UniProtKB-UniRule"/>
</dbReference>
<dbReference type="CDD" id="cd18185">
    <property type="entry name" value="ATP-synt_Fo_c_ATPE"/>
    <property type="match status" value="1"/>
</dbReference>
<dbReference type="FunFam" id="1.20.20.10:FF:000002">
    <property type="entry name" value="ATP synthase subunit c"/>
    <property type="match status" value="1"/>
</dbReference>
<dbReference type="Gene3D" id="1.20.20.10">
    <property type="entry name" value="F1F0 ATP synthase subunit C"/>
    <property type="match status" value="1"/>
</dbReference>
<dbReference type="HAMAP" id="MF_01396">
    <property type="entry name" value="ATP_synth_c_bact"/>
    <property type="match status" value="1"/>
</dbReference>
<dbReference type="InterPro" id="IPR005953">
    <property type="entry name" value="ATP_synth_csu_bac/chlpt"/>
</dbReference>
<dbReference type="InterPro" id="IPR000454">
    <property type="entry name" value="ATP_synth_F0_csu"/>
</dbReference>
<dbReference type="InterPro" id="IPR020537">
    <property type="entry name" value="ATP_synth_F0_csu_DDCD_BS"/>
</dbReference>
<dbReference type="InterPro" id="IPR038662">
    <property type="entry name" value="ATP_synth_F0_csu_sf"/>
</dbReference>
<dbReference type="InterPro" id="IPR002379">
    <property type="entry name" value="ATPase_proteolipid_c-like_dom"/>
</dbReference>
<dbReference type="InterPro" id="IPR035921">
    <property type="entry name" value="F/V-ATP_Csub_sf"/>
</dbReference>
<dbReference type="NCBIfam" id="TIGR01260">
    <property type="entry name" value="ATP_synt_c"/>
    <property type="match status" value="1"/>
</dbReference>
<dbReference type="NCBIfam" id="NF005363">
    <property type="entry name" value="PRK06876.1"/>
    <property type="match status" value="1"/>
</dbReference>
<dbReference type="Pfam" id="PF00137">
    <property type="entry name" value="ATP-synt_C"/>
    <property type="match status" value="1"/>
</dbReference>
<dbReference type="PRINTS" id="PR00124">
    <property type="entry name" value="ATPASEC"/>
</dbReference>
<dbReference type="SUPFAM" id="SSF81333">
    <property type="entry name" value="F1F0 ATP synthase subunit C"/>
    <property type="match status" value="1"/>
</dbReference>
<dbReference type="PROSITE" id="PS00605">
    <property type="entry name" value="ATPASE_C"/>
    <property type="match status" value="1"/>
</dbReference>
<sequence length="85" mass="8608">METVVGLTAIAVALLIGLGALGTAIGFGLLGGKFLEGAARQPEMVPMLQVKMFIVAGLLDAVTMIGVGIALFFTFANPFVGQIAG</sequence>
<organism>
    <name type="scientific">Pseudomonas paraeruginosa (strain DSM 24068 / PA7)</name>
    <name type="common">Pseudomonas aeruginosa (strain PA7)</name>
    <dbReference type="NCBI Taxonomy" id="381754"/>
    <lineage>
        <taxon>Bacteria</taxon>
        <taxon>Pseudomonadati</taxon>
        <taxon>Pseudomonadota</taxon>
        <taxon>Gammaproteobacteria</taxon>
        <taxon>Pseudomonadales</taxon>
        <taxon>Pseudomonadaceae</taxon>
        <taxon>Pseudomonas</taxon>
        <taxon>Pseudomonas paraeruginosa</taxon>
    </lineage>
</organism>
<keyword id="KW-0066">ATP synthesis</keyword>
<keyword id="KW-0997">Cell inner membrane</keyword>
<keyword id="KW-1003">Cell membrane</keyword>
<keyword id="KW-0138">CF(0)</keyword>
<keyword id="KW-0375">Hydrogen ion transport</keyword>
<keyword id="KW-0406">Ion transport</keyword>
<keyword id="KW-0446">Lipid-binding</keyword>
<keyword id="KW-0472">Membrane</keyword>
<keyword id="KW-0812">Transmembrane</keyword>
<keyword id="KW-1133">Transmembrane helix</keyword>
<keyword id="KW-0813">Transport</keyword>
<evidence type="ECO:0000255" key="1">
    <source>
        <dbReference type="HAMAP-Rule" id="MF_01396"/>
    </source>
</evidence>
<protein>
    <recommendedName>
        <fullName evidence="1">ATP synthase subunit c</fullName>
    </recommendedName>
    <alternativeName>
        <fullName evidence="1">ATP synthase F(0) sector subunit c</fullName>
    </alternativeName>
    <alternativeName>
        <fullName evidence="1">F-type ATPase subunit c</fullName>
        <shortName evidence="1">F-ATPase subunit c</shortName>
    </alternativeName>
    <alternativeName>
        <fullName evidence="1">Lipid-binding protein</fullName>
    </alternativeName>
</protein>
<reference key="1">
    <citation type="submission" date="2007-06" db="EMBL/GenBank/DDBJ databases">
        <authorList>
            <person name="Dodson R.J."/>
            <person name="Harkins D."/>
            <person name="Paulsen I.T."/>
        </authorList>
    </citation>
    <scope>NUCLEOTIDE SEQUENCE [LARGE SCALE GENOMIC DNA]</scope>
    <source>
        <strain>DSM 24068 / PA7</strain>
    </source>
</reference>
<name>ATPL_PSEP7</name>
<gene>
    <name evidence="1" type="primary">atpE</name>
    <name type="ordered locus">PSPA7_6361</name>
</gene>
<accession>A6VF37</accession>
<comment type="function">
    <text evidence="1">F(1)F(0) ATP synthase produces ATP from ADP in the presence of a proton or sodium gradient. F-type ATPases consist of two structural domains, F(1) containing the extramembraneous catalytic core and F(0) containing the membrane proton channel, linked together by a central stalk and a peripheral stalk. During catalysis, ATP synthesis in the catalytic domain of F(1) is coupled via a rotary mechanism of the central stalk subunits to proton translocation.</text>
</comment>
<comment type="function">
    <text evidence="1">Key component of the F(0) channel; it plays a direct role in translocation across the membrane. A homomeric c-ring of between 10-14 subunits forms the central stalk rotor element with the F(1) delta and epsilon subunits.</text>
</comment>
<comment type="subunit">
    <text evidence="1">F-type ATPases have 2 components, F(1) - the catalytic core - and F(0) - the membrane proton channel. F(1) has five subunits: alpha(3), beta(3), gamma(1), delta(1), epsilon(1). F(0) has three main subunits: a(1), b(2) and c(10-14). The alpha and beta chains form an alternating ring which encloses part of the gamma chain. F(1) is attached to F(0) by a central stalk formed by the gamma and epsilon chains, while a peripheral stalk is formed by the delta and b chains.</text>
</comment>
<comment type="subcellular location">
    <subcellularLocation>
        <location evidence="1">Cell inner membrane</location>
        <topology evidence="1">Multi-pass membrane protein</topology>
    </subcellularLocation>
</comment>
<comment type="similarity">
    <text evidence="1">Belongs to the ATPase C chain family.</text>
</comment>
<feature type="chain" id="PRO_1000184436" description="ATP synthase subunit c">
    <location>
        <begin position="1"/>
        <end position="85"/>
    </location>
</feature>
<feature type="transmembrane region" description="Helical" evidence="1">
    <location>
        <begin position="10"/>
        <end position="30"/>
    </location>
</feature>
<feature type="transmembrane region" description="Helical" evidence="1">
    <location>
        <begin position="53"/>
        <end position="73"/>
    </location>
</feature>
<feature type="site" description="Reversibly protonated during proton transport" evidence="1">
    <location>
        <position position="60"/>
    </location>
</feature>